<proteinExistence type="predicted"/>
<protein>
    <recommendedName>
        <fullName>Uncharacterized protein MJ1106</fullName>
    </recommendedName>
</protein>
<sequence>MLKNLLYKIEKLRSGELEGFEVLKEHIQSLDEFQYQQIVERLKFQIELVEKYKPKVRPAIDPMVSTELGIYRRLDDFEIGKLLDYPECCIKSFVEDVRVAIDREHLKEVEEMKEELKNKGIYAIVLPSGFIPCSLKCEEAIKRGFIGYLTKEEFDKILELEKELKEKIRHWHFGYDEYYEKIILP</sequence>
<name>Y1106_METJA</name>
<evidence type="ECO:0000305" key="1"/>
<feature type="chain" id="PRO_0000107169" description="Uncharacterized protein MJ1106">
    <location>
        <begin position="1"/>
        <end position="185"/>
    </location>
</feature>
<organism>
    <name type="scientific">Methanocaldococcus jannaschii (strain ATCC 43067 / DSM 2661 / JAL-1 / JCM 10045 / NBRC 100440)</name>
    <name type="common">Methanococcus jannaschii</name>
    <dbReference type="NCBI Taxonomy" id="243232"/>
    <lineage>
        <taxon>Archaea</taxon>
        <taxon>Methanobacteriati</taxon>
        <taxon>Methanobacteriota</taxon>
        <taxon>Methanomada group</taxon>
        <taxon>Methanococci</taxon>
        <taxon>Methanococcales</taxon>
        <taxon>Methanocaldococcaceae</taxon>
        <taxon>Methanocaldococcus</taxon>
    </lineage>
</organism>
<comment type="similarity">
    <text evidence="1">To M.thermoautotrophicum MTH236.</text>
</comment>
<gene>
    <name type="ordered locus">MJ1106</name>
</gene>
<keyword id="KW-1185">Reference proteome</keyword>
<accession>Q58506</accession>
<dbReference type="EMBL" id="L77117">
    <property type="protein sequence ID" value="AAB99109.1"/>
    <property type="molecule type" value="Genomic_DNA"/>
</dbReference>
<dbReference type="PIR" id="A64438">
    <property type="entry name" value="A64438"/>
</dbReference>
<dbReference type="RefSeq" id="WP_010870618.1">
    <property type="nucleotide sequence ID" value="NC_000909.1"/>
</dbReference>
<dbReference type="SMR" id="Q58506"/>
<dbReference type="FunCoup" id="Q58506">
    <property type="interactions" value="3"/>
</dbReference>
<dbReference type="STRING" id="243232.MJ_1106"/>
<dbReference type="PaxDb" id="243232-MJ_1106"/>
<dbReference type="EnsemblBacteria" id="AAB99109">
    <property type="protein sequence ID" value="AAB99109"/>
    <property type="gene ID" value="MJ_1106"/>
</dbReference>
<dbReference type="GeneID" id="1452003"/>
<dbReference type="KEGG" id="mja:MJ_1106"/>
<dbReference type="eggNOG" id="arCOG04822">
    <property type="taxonomic scope" value="Archaea"/>
</dbReference>
<dbReference type="HOGENOM" id="CLU_129114_0_0_2"/>
<dbReference type="InParanoid" id="Q58506"/>
<dbReference type="OrthoDB" id="65030at2157"/>
<dbReference type="Proteomes" id="UP000000805">
    <property type="component" value="Chromosome"/>
</dbReference>
<dbReference type="InterPro" id="IPR007556">
    <property type="entry name" value="DUF483"/>
</dbReference>
<dbReference type="Pfam" id="PF04467">
    <property type="entry name" value="DUF483"/>
    <property type="match status" value="1"/>
</dbReference>
<reference key="1">
    <citation type="journal article" date="1996" name="Science">
        <title>Complete genome sequence of the methanogenic archaeon, Methanococcus jannaschii.</title>
        <authorList>
            <person name="Bult C.J."/>
            <person name="White O."/>
            <person name="Olsen G.J."/>
            <person name="Zhou L."/>
            <person name="Fleischmann R.D."/>
            <person name="Sutton G.G."/>
            <person name="Blake J.A."/>
            <person name="FitzGerald L.M."/>
            <person name="Clayton R.A."/>
            <person name="Gocayne J.D."/>
            <person name="Kerlavage A.R."/>
            <person name="Dougherty B.A."/>
            <person name="Tomb J.-F."/>
            <person name="Adams M.D."/>
            <person name="Reich C.I."/>
            <person name="Overbeek R."/>
            <person name="Kirkness E.F."/>
            <person name="Weinstock K.G."/>
            <person name="Merrick J.M."/>
            <person name="Glodek A."/>
            <person name="Scott J.L."/>
            <person name="Geoghagen N.S.M."/>
            <person name="Weidman J.F."/>
            <person name="Fuhrmann J.L."/>
            <person name="Nguyen D."/>
            <person name="Utterback T.R."/>
            <person name="Kelley J.M."/>
            <person name="Peterson J.D."/>
            <person name="Sadow P.W."/>
            <person name="Hanna M.C."/>
            <person name="Cotton M.D."/>
            <person name="Roberts K.M."/>
            <person name="Hurst M.A."/>
            <person name="Kaine B.P."/>
            <person name="Borodovsky M."/>
            <person name="Klenk H.-P."/>
            <person name="Fraser C.M."/>
            <person name="Smith H.O."/>
            <person name="Woese C.R."/>
            <person name="Venter J.C."/>
        </authorList>
    </citation>
    <scope>NUCLEOTIDE SEQUENCE [LARGE SCALE GENOMIC DNA]</scope>
    <source>
        <strain>ATCC 43067 / DSM 2661 / JAL-1 / JCM 10045 / NBRC 100440</strain>
    </source>
</reference>